<name>RL5_STAA2</name>
<protein>
    <recommendedName>
        <fullName evidence="1">Large ribosomal subunit protein uL5</fullName>
    </recommendedName>
    <alternativeName>
        <fullName evidence="2">50S ribosomal protein L5</fullName>
    </alternativeName>
</protein>
<comment type="function">
    <text evidence="1">This is one of the proteins that bind and probably mediate the attachment of the 5S RNA into the large ribosomal subunit, where it forms part of the central protuberance. In the 70S ribosome it contacts protein S13 of the 30S subunit (bridge B1b), connecting the 2 subunits; this bridge is implicated in subunit movement. Contacts the P site tRNA; the 5S rRNA and some of its associated proteins might help stabilize positioning of ribosome-bound tRNAs.</text>
</comment>
<comment type="subunit">
    <text evidence="1">Part of the 50S ribosomal subunit; part of the 5S rRNA/L5/L18/L25 subcomplex. Contacts the 5S rRNA and the P site tRNA. Forms a bridge to the 30S subunit in the 70S ribosome.</text>
</comment>
<comment type="similarity">
    <text evidence="1">Belongs to the universal ribosomal protein uL5 family.</text>
</comment>
<reference key="1">
    <citation type="submission" date="2007-06" db="EMBL/GenBank/DDBJ databases">
        <title>Complete sequence of chromosome of Staphylococcus aureus subsp. aureus JH1.</title>
        <authorList>
            <consortium name="US DOE Joint Genome Institute"/>
            <person name="Copeland A."/>
            <person name="Lucas S."/>
            <person name="Lapidus A."/>
            <person name="Barry K."/>
            <person name="Detter J.C."/>
            <person name="Glavina del Rio T."/>
            <person name="Hammon N."/>
            <person name="Israni S."/>
            <person name="Dalin E."/>
            <person name="Tice H."/>
            <person name="Pitluck S."/>
            <person name="Chain P."/>
            <person name="Malfatti S."/>
            <person name="Shin M."/>
            <person name="Vergez L."/>
            <person name="Schmutz J."/>
            <person name="Larimer F."/>
            <person name="Land M."/>
            <person name="Hauser L."/>
            <person name="Kyrpides N."/>
            <person name="Ivanova N."/>
            <person name="Tomasz A."/>
            <person name="Richardson P."/>
        </authorList>
    </citation>
    <scope>NUCLEOTIDE SEQUENCE [LARGE SCALE GENOMIC DNA]</scope>
    <source>
        <strain>JH1</strain>
    </source>
</reference>
<evidence type="ECO:0000255" key="1">
    <source>
        <dbReference type="HAMAP-Rule" id="MF_01333"/>
    </source>
</evidence>
<evidence type="ECO:0000305" key="2"/>
<dbReference type="EMBL" id="CP000736">
    <property type="protein sequence ID" value="ABR53131.1"/>
    <property type="molecule type" value="Genomic_DNA"/>
</dbReference>
<dbReference type="SMR" id="A6U3W3"/>
<dbReference type="KEGG" id="sah:SaurJH1_2306"/>
<dbReference type="HOGENOM" id="CLU_061015_2_1_9"/>
<dbReference type="GO" id="GO:1990904">
    <property type="term" value="C:ribonucleoprotein complex"/>
    <property type="evidence" value="ECO:0007669"/>
    <property type="project" value="UniProtKB-KW"/>
</dbReference>
<dbReference type="GO" id="GO:0005840">
    <property type="term" value="C:ribosome"/>
    <property type="evidence" value="ECO:0007669"/>
    <property type="project" value="UniProtKB-KW"/>
</dbReference>
<dbReference type="GO" id="GO:0019843">
    <property type="term" value="F:rRNA binding"/>
    <property type="evidence" value="ECO:0007669"/>
    <property type="project" value="UniProtKB-UniRule"/>
</dbReference>
<dbReference type="GO" id="GO:0003735">
    <property type="term" value="F:structural constituent of ribosome"/>
    <property type="evidence" value="ECO:0007669"/>
    <property type="project" value="InterPro"/>
</dbReference>
<dbReference type="GO" id="GO:0000049">
    <property type="term" value="F:tRNA binding"/>
    <property type="evidence" value="ECO:0007669"/>
    <property type="project" value="UniProtKB-UniRule"/>
</dbReference>
<dbReference type="GO" id="GO:0006412">
    <property type="term" value="P:translation"/>
    <property type="evidence" value="ECO:0007669"/>
    <property type="project" value="UniProtKB-UniRule"/>
</dbReference>
<dbReference type="FunFam" id="3.30.1440.10:FF:000001">
    <property type="entry name" value="50S ribosomal protein L5"/>
    <property type="match status" value="1"/>
</dbReference>
<dbReference type="Gene3D" id="3.30.1440.10">
    <property type="match status" value="1"/>
</dbReference>
<dbReference type="HAMAP" id="MF_01333_B">
    <property type="entry name" value="Ribosomal_uL5_B"/>
    <property type="match status" value="1"/>
</dbReference>
<dbReference type="InterPro" id="IPR002132">
    <property type="entry name" value="Ribosomal_uL5"/>
</dbReference>
<dbReference type="InterPro" id="IPR020930">
    <property type="entry name" value="Ribosomal_uL5_bac-type"/>
</dbReference>
<dbReference type="InterPro" id="IPR031309">
    <property type="entry name" value="Ribosomal_uL5_C"/>
</dbReference>
<dbReference type="InterPro" id="IPR020929">
    <property type="entry name" value="Ribosomal_uL5_CS"/>
</dbReference>
<dbReference type="InterPro" id="IPR022803">
    <property type="entry name" value="Ribosomal_uL5_dom_sf"/>
</dbReference>
<dbReference type="InterPro" id="IPR031310">
    <property type="entry name" value="Ribosomal_uL5_N"/>
</dbReference>
<dbReference type="NCBIfam" id="NF000585">
    <property type="entry name" value="PRK00010.1"/>
    <property type="match status" value="1"/>
</dbReference>
<dbReference type="PANTHER" id="PTHR11994">
    <property type="entry name" value="60S RIBOSOMAL PROTEIN L11-RELATED"/>
    <property type="match status" value="1"/>
</dbReference>
<dbReference type="Pfam" id="PF00281">
    <property type="entry name" value="Ribosomal_L5"/>
    <property type="match status" value="1"/>
</dbReference>
<dbReference type="Pfam" id="PF00673">
    <property type="entry name" value="Ribosomal_L5_C"/>
    <property type="match status" value="1"/>
</dbReference>
<dbReference type="PIRSF" id="PIRSF002161">
    <property type="entry name" value="Ribosomal_L5"/>
    <property type="match status" value="1"/>
</dbReference>
<dbReference type="SUPFAM" id="SSF55282">
    <property type="entry name" value="RL5-like"/>
    <property type="match status" value="1"/>
</dbReference>
<dbReference type="PROSITE" id="PS00358">
    <property type="entry name" value="RIBOSOMAL_L5"/>
    <property type="match status" value="1"/>
</dbReference>
<gene>
    <name evidence="1" type="primary">rplE</name>
    <name type="ordered locus">SaurJH1_2306</name>
</gene>
<accession>A6U3W3</accession>
<organism>
    <name type="scientific">Staphylococcus aureus (strain JH1)</name>
    <dbReference type="NCBI Taxonomy" id="359787"/>
    <lineage>
        <taxon>Bacteria</taxon>
        <taxon>Bacillati</taxon>
        <taxon>Bacillota</taxon>
        <taxon>Bacilli</taxon>
        <taxon>Bacillales</taxon>
        <taxon>Staphylococcaceae</taxon>
        <taxon>Staphylococcus</taxon>
    </lineage>
</organism>
<proteinExistence type="inferred from homology"/>
<sequence length="179" mass="20267">MNRLKEKFNTEVTENLMKKFNYSSVMEVPKIDKIVVNMGVGDAVQNSKVLDNAVEELELITGQKPLVTKAKKSIATFRLREGMPIGAKVTLRGERMYEFLDKLISVSLPRVRDFQGVSKKAFDGRGNYTLGVKEQLIFPEIDYDKVSKVRGMDIVIVTTANTDEEARELLANFGMPFRK</sequence>
<keyword id="KW-0687">Ribonucleoprotein</keyword>
<keyword id="KW-0689">Ribosomal protein</keyword>
<keyword id="KW-0694">RNA-binding</keyword>
<keyword id="KW-0699">rRNA-binding</keyword>
<keyword id="KW-0820">tRNA-binding</keyword>
<feature type="chain" id="PRO_1000086611" description="Large ribosomal subunit protein uL5">
    <location>
        <begin position="1"/>
        <end position="179"/>
    </location>
</feature>